<accession>P55584</accession>
<protein>
    <recommendedName>
        <fullName>Uncharacterized protein y4nL</fullName>
    </recommendedName>
</protein>
<proteinExistence type="inferred from homology"/>
<geneLocation type="plasmid">
    <name>sym pNGR234a</name>
</geneLocation>
<keyword id="KW-0520">NAD</keyword>
<keyword id="KW-0614">Plasmid</keyword>
<keyword id="KW-1185">Reference proteome</keyword>
<dbReference type="EMBL" id="U00090">
    <property type="protein sequence ID" value="AAB91791.1"/>
    <property type="molecule type" value="Genomic_DNA"/>
</dbReference>
<dbReference type="RefSeq" id="NP_443995.1">
    <property type="nucleotide sequence ID" value="NC_000914.2"/>
</dbReference>
<dbReference type="RefSeq" id="WP_010875257.1">
    <property type="nucleotide sequence ID" value="NC_000914.2"/>
</dbReference>
<dbReference type="SMR" id="P55584"/>
<dbReference type="KEGG" id="rhi:NGR_a02300"/>
<dbReference type="PATRIC" id="fig|394.7.peg.243"/>
<dbReference type="eggNOG" id="COG0451">
    <property type="taxonomic scope" value="Bacteria"/>
</dbReference>
<dbReference type="HOGENOM" id="CLU_007383_6_1_5"/>
<dbReference type="OrthoDB" id="9814124at2"/>
<dbReference type="Proteomes" id="UP000001054">
    <property type="component" value="Plasmid pNGR234a"/>
</dbReference>
<dbReference type="GO" id="GO:0005737">
    <property type="term" value="C:cytoplasm"/>
    <property type="evidence" value="ECO:0007669"/>
    <property type="project" value="TreeGrafter"/>
</dbReference>
<dbReference type="GO" id="GO:0004029">
    <property type="term" value="F:aldehyde dehydrogenase (NAD+) activity"/>
    <property type="evidence" value="ECO:0007669"/>
    <property type="project" value="TreeGrafter"/>
</dbReference>
<dbReference type="Gene3D" id="3.40.50.720">
    <property type="entry name" value="NAD(P)-binding Rossmann-like Domain"/>
    <property type="match status" value="1"/>
</dbReference>
<dbReference type="InterPro" id="IPR001509">
    <property type="entry name" value="Epimerase_deHydtase"/>
</dbReference>
<dbReference type="InterPro" id="IPR036291">
    <property type="entry name" value="NAD(P)-bd_dom_sf"/>
</dbReference>
<dbReference type="InterPro" id="IPR051783">
    <property type="entry name" value="NAD(P)-dependent_oxidoreduct"/>
</dbReference>
<dbReference type="PANTHER" id="PTHR48079:SF6">
    <property type="entry name" value="NAD(P)-BINDING DOMAIN-CONTAINING PROTEIN-RELATED"/>
    <property type="match status" value="1"/>
</dbReference>
<dbReference type="PANTHER" id="PTHR48079">
    <property type="entry name" value="PROTEIN YEEZ"/>
    <property type="match status" value="1"/>
</dbReference>
<dbReference type="Pfam" id="PF01370">
    <property type="entry name" value="Epimerase"/>
    <property type="match status" value="1"/>
</dbReference>
<dbReference type="SUPFAM" id="SSF51735">
    <property type="entry name" value="NAD(P)-binding Rossmann-fold domains"/>
    <property type="match status" value="1"/>
</dbReference>
<evidence type="ECO:0000305" key="1"/>
<reference key="1">
    <citation type="journal article" date="1997" name="Nature">
        <title>Molecular basis of symbiosis between Rhizobium and legumes.</title>
        <authorList>
            <person name="Freiberg C.A."/>
            <person name="Fellay R."/>
            <person name="Bairoch A."/>
            <person name="Broughton W.J."/>
            <person name="Rosenthal A."/>
            <person name="Perret X."/>
        </authorList>
    </citation>
    <scope>NUCLEOTIDE SEQUENCE [LARGE SCALE GENOMIC DNA]</scope>
    <source>
        <strain>NBRC 101917 / NGR234</strain>
    </source>
</reference>
<reference key="2">
    <citation type="journal article" date="2009" name="Appl. Environ. Microbiol.">
        <title>Rhizobium sp. strain NGR234 possesses a remarkable number of secretion systems.</title>
        <authorList>
            <person name="Schmeisser C."/>
            <person name="Liesegang H."/>
            <person name="Krysciak D."/>
            <person name="Bakkou N."/>
            <person name="Le Quere A."/>
            <person name="Wollherr A."/>
            <person name="Heinemeyer I."/>
            <person name="Morgenstern B."/>
            <person name="Pommerening-Roeser A."/>
            <person name="Flores M."/>
            <person name="Palacios R."/>
            <person name="Brenner S."/>
            <person name="Gottschalk G."/>
            <person name="Schmitz R.A."/>
            <person name="Broughton W.J."/>
            <person name="Perret X."/>
            <person name="Strittmatter A.W."/>
            <person name="Streit W.R."/>
        </authorList>
    </citation>
    <scope>NUCLEOTIDE SEQUENCE [LARGE SCALE GENOMIC DNA]</scope>
    <source>
        <strain>NBRC 101917 / NGR234</strain>
    </source>
</reference>
<sequence>MQEITPITLNAPLVLLTGAAGWLGGRVAAALTTGLPDAGLLANGSFRVRALVPKGEDISELRKQGMEIATGDLREMQSVRAFVAGAEGAVLIHMAGIIHPKNVAQFEAINTQGTINLVTAAQKAGVRRAVVMSSNSPVGFNPHSDHRFTEESPYDPHAGYGRSKMLMERALRAEVAAGSTMEIVIVRAPWFYGPNQPSRQTLFFKMVKEGKFPIIGSGRNRRSMGYTDNLAQGILLAAVHERAAGDIFWLADETPYTMNEIIEVVGMVLHEDFGMTVKPNPFRLPDIVGGAATILDATLQYAGIYHQKIHVLSEMNKTIACDITKARKVLGYAPKIALREGMQRSVDWCVKNGQSF</sequence>
<name>Y4NL_SINFN</name>
<gene>
    <name type="ordered locus">NGR_a02300</name>
    <name type="ORF">y4nL</name>
</gene>
<comment type="function">
    <text>Putative nucleotide sugar epimerase/dehydrogenase.</text>
</comment>
<comment type="cofactor">
    <cofactor>
        <name>NAD(+)</name>
        <dbReference type="ChEBI" id="CHEBI:57540"/>
    </cofactor>
    <cofactor>
        <name>NADP(+)</name>
        <dbReference type="ChEBI" id="CHEBI:58349"/>
    </cofactor>
</comment>
<comment type="similarity">
    <text evidence="1">Belongs to the NAD(P)-dependent epimerase/dehydratase family.</text>
</comment>
<organism>
    <name type="scientific">Sinorhizobium fredii (strain NBRC 101917 / NGR234)</name>
    <dbReference type="NCBI Taxonomy" id="394"/>
    <lineage>
        <taxon>Bacteria</taxon>
        <taxon>Pseudomonadati</taxon>
        <taxon>Pseudomonadota</taxon>
        <taxon>Alphaproteobacteria</taxon>
        <taxon>Hyphomicrobiales</taxon>
        <taxon>Rhizobiaceae</taxon>
        <taxon>Sinorhizobium/Ensifer group</taxon>
        <taxon>Sinorhizobium</taxon>
    </lineage>
</organism>
<feature type="chain" id="PRO_0000200920" description="Uncharacterized protein y4nL">
    <location>
        <begin position="1"/>
        <end position="356"/>
    </location>
</feature>